<dbReference type="EMBL" id="CP000377">
    <property type="protein sequence ID" value="ABF63329.1"/>
    <property type="molecule type" value="Genomic_DNA"/>
</dbReference>
<dbReference type="RefSeq" id="WP_011537943.1">
    <property type="nucleotide sequence ID" value="NC_008044.1"/>
</dbReference>
<dbReference type="SMR" id="Q1GJ37"/>
<dbReference type="STRING" id="292414.TM1040_0596"/>
<dbReference type="KEGG" id="sit:TM1040_0596"/>
<dbReference type="eggNOG" id="COG0234">
    <property type="taxonomic scope" value="Bacteria"/>
</dbReference>
<dbReference type="HOGENOM" id="CLU_132825_1_0_5"/>
<dbReference type="OrthoDB" id="9806791at2"/>
<dbReference type="Proteomes" id="UP000000636">
    <property type="component" value="Chromosome"/>
</dbReference>
<dbReference type="GO" id="GO:0005737">
    <property type="term" value="C:cytoplasm"/>
    <property type="evidence" value="ECO:0007669"/>
    <property type="project" value="UniProtKB-SubCell"/>
</dbReference>
<dbReference type="GO" id="GO:0005524">
    <property type="term" value="F:ATP binding"/>
    <property type="evidence" value="ECO:0007669"/>
    <property type="project" value="InterPro"/>
</dbReference>
<dbReference type="GO" id="GO:0046872">
    <property type="term" value="F:metal ion binding"/>
    <property type="evidence" value="ECO:0007669"/>
    <property type="project" value="TreeGrafter"/>
</dbReference>
<dbReference type="GO" id="GO:0044183">
    <property type="term" value="F:protein folding chaperone"/>
    <property type="evidence" value="ECO:0007669"/>
    <property type="project" value="InterPro"/>
</dbReference>
<dbReference type="GO" id="GO:0051087">
    <property type="term" value="F:protein-folding chaperone binding"/>
    <property type="evidence" value="ECO:0007669"/>
    <property type="project" value="TreeGrafter"/>
</dbReference>
<dbReference type="GO" id="GO:0051082">
    <property type="term" value="F:unfolded protein binding"/>
    <property type="evidence" value="ECO:0007669"/>
    <property type="project" value="TreeGrafter"/>
</dbReference>
<dbReference type="GO" id="GO:0051085">
    <property type="term" value="P:chaperone cofactor-dependent protein refolding"/>
    <property type="evidence" value="ECO:0007669"/>
    <property type="project" value="TreeGrafter"/>
</dbReference>
<dbReference type="CDD" id="cd00320">
    <property type="entry name" value="cpn10"/>
    <property type="match status" value="1"/>
</dbReference>
<dbReference type="FunFam" id="2.30.33.40:FF:000001">
    <property type="entry name" value="10 kDa chaperonin"/>
    <property type="match status" value="1"/>
</dbReference>
<dbReference type="Gene3D" id="2.30.33.40">
    <property type="entry name" value="GroES chaperonin"/>
    <property type="match status" value="1"/>
</dbReference>
<dbReference type="HAMAP" id="MF_00580">
    <property type="entry name" value="CH10"/>
    <property type="match status" value="1"/>
</dbReference>
<dbReference type="InterPro" id="IPR020818">
    <property type="entry name" value="Chaperonin_GroES"/>
</dbReference>
<dbReference type="InterPro" id="IPR037124">
    <property type="entry name" value="Chaperonin_GroES_sf"/>
</dbReference>
<dbReference type="InterPro" id="IPR018369">
    <property type="entry name" value="Chaprnonin_Cpn10_CS"/>
</dbReference>
<dbReference type="InterPro" id="IPR011032">
    <property type="entry name" value="GroES-like_sf"/>
</dbReference>
<dbReference type="NCBIfam" id="NF001527">
    <property type="entry name" value="PRK00364.1-2"/>
    <property type="match status" value="1"/>
</dbReference>
<dbReference type="NCBIfam" id="NF001529">
    <property type="entry name" value="PRK00364.1-5"/>
    <property type="match status" value="1"/>
</dbReference>
<dbReference type="NCBIfam" id="NF001531">
    <property type="entry name" value="PRK00364.2-2"/>
    <property type="match status" value="1"/>
</dbReference>
<dbReference type="NCBIfam" id="NF001533">
    <property type="entry name" value="PRK00364.2-4"/>
    <property type="match status" value="1"/>
</dbReference>
<dbReference type="PANTHER" id="PTHR10772">
    <property type="entry name" value="10 KDA HEAT SHOCK PROTEIN"/>
    <property type="match status" value="1"/>
</dbReference>
<dbReference type="PANTHER" id="PTHR10772:SF58">
    <property type="entry name" value="CO-CHAPERONIN GROES"/>
    <property type="match status" value="1"/>
</dbReference>
<dbReference type="Pfam" id="PF00166">
    <property type="entry name" value="Cpn10"/>
    <property type="match status" value="1"/>
</dbReference>
<dbReference type="PRINTS" id="PR00297">
    <property type="entry name" value="CHAPERONIN10"/>
</dbReference>
<dbReference type="SMART" id="SM00883">
    <property type="entry name" value="Cpn10"/>
    <property type="match status" value="1"/>
</dbReference>
<dbReference type="SUPFAM" id="SSF50129">
    <property type="entry name" value="GroES-like"/>
    <property type="match status" value="1"/>
</dbReference>
<dbReference type="PROSITE" id="PS00681">
    <property type="entry name" value="CHAPERONINS_CPN10"/>
    <property type="match status" value="1"/>
</dbReference>
<proteinExistence type="inferred from homology"/>
<accession>Q1GJ37</accession>
<keyword id="KW-0143">Chaperone</keyword>
<keyword id="KW-0963">Cytoplasm</keyword>
<keyword id="KW-1185">Reference proteome</keyword>
<organism>
    <name type="scientific">Ruegeria sp. (strain TM1040)</name>
    <name type="common">Silicibacter sp.</name>
    <dbReference type="NCBI Taxonomy" id="292414"/>
    <lineage>
        <taxon>Bacteria</taxon>
        <taxon>Pseudomonadati</taxon>
        <taxon>Pseudomonadota</taxon>
        <taxon>Alphaproteobacteria</taxon>
        <taxon>Rhodobacterales</taxon>
        <taxon>Roseobacteraceae</taxon>
        <taxon>Ruegeria</taxon>
    </lineage>
</organism>
<protein>
    <recommendedName>
        <fullName evidence="1">Co-chaperonin GroES</fullName>
    </recommendedName>
    <alternativeName>
        <fullName evidence="1">10 kDa chaperonin</fullName>
    </alternativeName>
    <alternativeName>
        <fullName evidence="1">Chaperonin-10</fullName>
        <shortName evidence="1">Cpn10</shortName>
    </alternativeName>
</protein>
<sequence>MALKPLHDRVLVRRTESEEKTAGGLIIPDSAKEKPSEGVVVACGEGARKDSGELIAMAVKEGDNILFGKWSGTEVTVDGEELLMMKESDIMGVIV</sequence>
<gene>
    <name evidence="1" type="primary">groES</name>
    <name evidence="1" type="synonym">groS</name>
    <name type="ordered locus">TM1040_0596</name>
</gene>
<feature type="chain" id="PRO_1000025373" description="Co-chaperonin GroES">
    <location>
        <begin position="1"/>
        <end position="95"/>
    </location>
</feature>
<evidence type="ECO:0000255" key="1">
    <source>
        <dbReference type="HAMAP-Rule" id="MF_00580"/>
    </source>
</evidence>
<name>CH10_RUEST</name>
<reference key="1">
    <citation type="submission" date="2006-05" db="EMBL/GenBank/DDBJ databases">
        <title>Complete sequence of chromosome of Silicibacter sp. TM1040.</title>
        <authorList>
            <consortium name="US DOE Joint Genome Institute"/>
            <person name="Copeland A."/>
            <person name="Lucas S."/>
            <person name="Lapidus A."/>
            <person name="Barry K."/>
            <person name="Detter J.C."/>
            <person name="Glavina del Rio T."/>
            <person name="Hammon N."/>
            <person name="Israni S."/>
            <person name="Dalin E."/>
            <person name="Tice H."/>
            <person name="Pitluck S."/>
            <person name="Brettin T."/>
            <person name="Bruce D."/>
            <person name="Han C."/>
            <person name="Tapia R."/>
            <person name="Goodwin L."/>
            <person name="Thompson L.S."/>
            <person name="Gilna P."/>
            <person name="Schmutz J."/>
            <person name="Larimer F."/>
            <person name="Land M."/>
            <person name="Hauser L."/>
            <person name="Kyrpides N."/>
            <person name="Kim E."/>
            <person name="Belas R."/>
            <person name="Moran M.A."/>
            <person name="Buchan A."/>
            <person name="Gonzalez J.M."/>
            <person name="Schell M.A."/>
            <person name="Sun F."/>
            <person name="Richardson P."/>
        </authorList>
    </citation>
    <scope>NUCLEOTIDE SEQUENCE [LARGE SCALE GENOMIC DNA]</scope>
    <source>
        <strain>TM1040</strain>
    </source>
</reference>
<comment type="function">
    <text evidence="1">Together with the chaperonin GroEL, plays an essential role in assisting protein folding. The GroEL-GroES system forms a nano-cage that allows encapsulation of the non-native substrate proteins and provides a physical environment optimized to promote and accelerate protein folding. GroES binds to the apical surface of the GroEL ring, thereby capping the opening of the GroEL channel.</text>
</comment>
<comment type="subunit">
    <text evidence="1">Heptamer of 7 subunits arranged in a ring. Interacts with the chaperonin GroEL.</text>
</comment>
<comment type="subcellular location">
    <subcellularLocation>
        <location evidence="1">Cytoplasm</location>
    </subcellularLocation>
</comment>
<comment type="similarity">
    <text evidence="1">Belongs to the GroES chaperonin family.</text>
</comment>